<sequence length="129" mass="14154">MKKVYATGRRKASIAKVWLTPGAGTMTINGLSLDAWLGGLEAKKLRVKQPLALTKQDTSVNIVATVLGGGFGGQADALRHGISRALVRFNPELKAILKPEGMMTRDSRVVERKKPGKRKARRSRQFSKR</sequence>
<accession>Q30UF7</accession>
<comment type="similarity">
    <text evidence="1">Belongs to the universal ribosomal protein uS9 family.</text>
</comment>
<proteinExistence type="inferred from homology"/>
<feature type="chain" id="PRO_1000128185" description="Small ribosomal subunit protein uS9">
    <location>
        <begin position="1"/>
        <end position="129"/>
    </location>
</feature>
<feature type="region of interest" description="Disordered" evidence="2">
    <location>
        <begin position="104"/>
        <end position="129"/>
    </location>
</feature>
<feature type="compositionally biased region" description="Basic and acidic residues" evidence="2">
    <location>
        <begin position="104"/>
        <end position="113"/>
    </location>
</feature>
<feature type="compositionally biased region" description="Basic residues" evidence="2">
    <location>
        <begin position="114"/>
        <end position="129"/>
    </location>
</feature>
<protein>
    <recommendedName>
        <fullName evidence="1">Small ribosomal subunit protein uS9</fullName>
    </recommendedName>
    <alternativeName>
        <fullName evidence="3">30S ribosomal protein S9</fullName>
    </alternativeName>
</protein>
<reference key="1">
    <citation type="journal article" date="2008" name="Appl. Environ. Microbiol.">
        <title>Genome of the epsilonproteobacterial chemolithoautotroph Sulfurimonas denitrificans.</title>
        <authorList>
            <person name="Sievert S.M."/>
            <person name="Scott K.M."/>
            <person name="Klotz M.G."/>
            <person name="Chain P.S.G."/>
            <person name="Hauser L.J."/>
            <person name="Hemp J."/>
            <person name="Huegler M."/>
            <person name="Land M."/>
            <person name="Lapidus A."/>
            <person name="Larimer F.W."/>
            <person name="Lucas S."/>
            <person name="Malfatti S.A."/>
            <person name="Meyer F."/>
            <person name="Paulsen I.T."/>
            <person name="Ren Q."/>
            <person name="Simon J."/>
            <person name="Bailey K."/>
            <person name="Diaz E."/>
            <person name="Fitzpatrick K.A."/>
            <person name="Glover B."/>
            <person name="Gwatney N."/>
            <person name="Korajkic A."/>
            <person name="Long A."/>
            <person name="Mobberley J.M."/>
            <person name="Pantry S.N."/>
            <person name="Pazder G."/>
            <person name="Peterson S."/>
            <person name="Quintanilla J.D."/>
            <person name="Sprinkle R."/>
            <person name="Stephens J."/>
            <person name="Thomas P."/>
            <person name="Vaughn R."/>
            <person name="Weber M.J."/>
            <person name="Wooten L.L."/>
        </authorList>
    </citation>
    <scope>NUCLEOTIDE SEQUENCE [LARGE SCALE GENOMIC DNA]</scope>
    <source>
        <strain>ATCC 33889 / DSM 1251</strain>
    </source>
</reference>
<organism>
    <name type="scientific">Sulfurimonas denitrificans (strain ATCC 33889 / DSM 1251)</name>
    <name type="common">Thiomicrospira denitrificans (strain ATCC 33889 / DSM 1251)</name>
    <dbReference type="NCBI Taxonomy" id="326298"/>
    <lineage>
        <taxon>Bacteria</taxon>
        <taxon>Pseudomonadati</taxon>
        <taxon>Campylobacterota</taxon>
        <taxon>Epsilonproteobacteria</taxon>
        <taxon>Campylobacterales</taxon>
        <taxon>Sulfurimonadaceae</taxon>
        <taxon>Sulfurimonas</taxon>
    </lineage>
</organism>
<gene>
    <name evidence="1" type="primary">rpsI</name>
    <name type="ordered locus">Suden_0093</name>
</gene>
<dbReference type="EMBL" id="CP000153">
    <property type="protein sequence ID" value="ABB43374.1"/>
    <property type="molecule type" value="Genomic_DNA"/>
</dbReference>
<dbReference type="RefSeq" id="WP_011371729.1">
    <property type="nucleotide sequence ID" value="NC_007575.1"/>
</dbReference>
<dbReference type="SMR" id="Q30UF7"/>
<dbReference type="STRING" id="326298.Suden_0093"/>
<dbReference type="KEGG" id="tdn:Suden_0093"/>
<dbReference type="eggNOG" id="COG0103">
    <property type="taxonomic scope" value="Bacteria"/>
</dbReference>
<dbReference type="HOGENOM" id="CLU_046483_2_1_7"/>
<dbReference type="OrthoDB" id="9803965at2"/>
<dbReference type="Proteomes" id="UP000002714">
    <property type="component" value="Chromosome"/>
</dbReference>
<dbReference type="GO" id="GO:0022627">
    <property type="term" value="C:cytosolic small ribosomal subunit"/>
    <property type="evidence" value="ECO:0007669"/>
    <property type="project" value="TreeGrafter"/>
</dbReference>
<dbReference type="GO" id="GO:0003723">
    <property type="term" value="F:RNA binding"/>
    <property type="evidence" value="ECO:0007669"/>
    <property type="project" value="TreeGrafter"/>
</dbReference>
<dbReference type="GO" id="GO:0003735">
    <property type="term" value="F:structural constituent of ribosome"/>
    <property type="evidence" value="ECO:0007669"/>
    <property type="project" value="InterPro"/>
</dbReference>
<dbReference type="GO" id="GO:0006412">
    <property type="term" value="P:translation"/>
    <property type="evidence" value="ECO:0007669"/>
    <property type="project" value="UniProtKB-UniRule"/>
</dbReference>
<dbReference type="FunFam" id="3.30.230.10:FF:000001">
    <property type="entry name" value="30S ribosomal protein S9"/>
    <property type="match status" value="1"/>
</dbReference>
<dbReference type="Gene3D" id="3.30.230.10">
    <property type="match status" value="1"/>
</dbReference>
<dbReference type="HAMAP" id="MF_00532_B">
    <property type="entry name" value="Ribosomal_uS9_B"/>
    <property type="match status" value="1"/>
</dbReference>
<dbReference type="InterPro" id="IPR020568">
    <property type="entry name" value="Ribosomal_Su5_D2-typ_SF"/>
</dbReference>
<dbReference type="InterPro" id="IPR000754">
    <property type="entry name" value="Ribosomal_uS9"/>
</dbReference>
<dbReference type="InterPro" id="IPR023035">
    <property type="entry name" value="Ribosomal_uS9_bac/plastid"/>
</dbReference>
<dbReference type="InterPro" id="IPR020574">
    <property type="entry name" value="Ribosomal_uS9_CS"/>
</dbReference>
<dbReference type="InterPro" id="IPR014721">
    <property type="entry name" value="Ribsml_uS5_D2-typ_fold_subgr"/>
</dbReference>
<dbReference type="NCBIfam" id="NF001099">
    <property type="entry name" value="PRK00132.1"/>
    <property type="match status" value="1"/>
</dbReference>
<dbReference type="PANTHER" id="PTHR21569">
    <property type="entry name" value="RIBOSOMAL PROTEIN S9"/>
    <property type="match status" value="1"/>
</dbReference>
<dbReference type="PANTHER" id="PTHR21569:SF1">
    <property type="entry name" value="SMALL RIBOSOMAL SUBUNIT PROTEIN US9M"/>
    <property type="match status" value="1"/>
</dbReference>
<dbReference type="Pfam" id="PF00380">
    <property type="entry name" value="Ribosomal_S9"/>
    <property type="match status" value="1"/>
</dbReference>
<dbReference type="SUPFAM" id="SSF54211">
    <property type="entry name" value="Ribosomal protein S5 domain 2-like"/>
    <property type="match status" value="1"/>
</dbReference>
<dbReference type="PROSITE" id="PS00360">
    <property type="entry name" value="RIBOSOMAL_S9"/>
    <property type="match status" value="1"/>
</dbReference>
<evidence type="ECO:0000255" key="1">
    <source>
        <dbReference type="HAMAP-Rule" id="MF_00532"/>
    </source>
</evidence>
<evidence type="ECO:0000256" key="2">
    <source>
        <dbReference type="SAM" id="MobiDB-lite"/>
    </source>
</evidence>
<evidence type="ECO:0000305" key="3"/>
<keyword id="KW-1185">Reference proteome</keyword>
<keyword id="KW-0687">Ribonucleoprotein</keyword>
<keyword id="KW-0689">Ribosomal protein</keyword>
<name>RS9_SULDN</name>